<keyword id="KW-0067">ATP-binding</keyword>
<keyword id="KW-0460">Magnesium</keyword>
<keyword id="KW-0479">Metal-binding</keyword>
<keyword id="KW-0547">Nucleotide-binding</keyword>
<keyword id="KW-0548">Nucleotidyltransferase</keyword>
<keyword id="KW-1185">Reference proteome</keyword>
<keyword id="KW-0692">RNA repair</keyword>
<keyword id="KW-0694">RNA-binding</keyword>
<keyword id="KW-0808">Transferase</keyword>
<keyword id="KW-0819">tRNA processing</keyword>
<comment type="function">
    <text evidence="1">Catalyzes the addition and repair of the essential 3'-terminal CCA sequence in tRNAs without using a nucleic acid template. Adds these three nucleotides in the order of C, C, and A to the tRNA nucleotide-73, using CTP and ATP as substrates and producing inorganic pyrophosphate. tRNA 3'-terminal CCA addition is required both for tRNA processing and repair. Also involved in tRNA surveillance by mediating tandem CCA addition to generate a CCACCA at the 3' terminus of unstable tRNAs. While stable tRNAs receive only 3'-terminal CCA, unstable tRNAs are marked with CCACCA and rapidly degraded.</text>
</comment>
<comment type="catalytic activity">
    <reaction evidence="1">
        <text>a tRNA precursor + 2 CTP + ATP = a tRNA with a 3' CCA end + 3 diphosphate</text>
        <dbReference type="Rhea" id="RHEA:14433"/>
        <dbReference type="Rhea" id="RHEA-COMP:10465"/>
        <dbReference type="Rhea" id="RHEA-COMP:10468"/>
        <dbReference type="ChEBI" id="CHEBI:30616"/>
        <dbReference type="ChEBI" id="CHEBI:33019"/>
        <dbReference type="ChEBI" id="CHEBI:37563"/>
        <dbReference type="ChEBI" id="CHEBI:74896"/>
        <dbReference type="ChEBI" id="CHEBI:83071"/>
        <dbReference type="EC" id="2.7.7.72"/>
    </reaction>
</comment>
<comment type="catalytic activity">
    <reaction evidence="1">
        <text>a tRNA with a 3' CCA end + 2 CTP + ATP = a tRNA with a 3' CCACCA end + 3 diphosphate</text>
        <dbReference type="Rhea" id="RHEA:76235"/>
        <dbReference type="Rhea" id="RHEA-COMP:10468"/>
        <dbReference type="Rhea" id="RHEA-COMP:18655"/>
        <dbReference type="ChEBI" id="CHEBI:30616"/>
        <dbReference type="ChEBI" id="CHEBI:33019"/>
        <dbReference type="ChEBI" id="CHEBI:37563"/>
        <dbReference type="ChEBI" id="CHEBI:83071"/>
        <dbReference type="ChEBI" id="CHEBI:195187"/>
    </reaction>
    <physiologicalReaction direction="left-to-right" evidence="1">
        <dbReference type="Rhea" id="RHEA:76236"/>
    </physiologicalReaction>
</comment>
<comment type="cofactor">
    <cofactor evidence="1">
        <name>Mg(2+)</name>
        <dbReference type="ChEBI" id="CHEBI:18420"/>
    </cofactor>
</comment>
<comment type="subunit">
    <text evidence="1">Homodimer.</text>
</comment>
<comment type="miscellaneous">
    <text evidence="1">A single active site specifically recognizes both ATP and CTP and is responsible for their addition.</text>
</comment>
<comment type="similarity">
    <text evidence="1">Belongs to the tRNA nucleotidyltransferase/poly(A) polymerase family. Archaeal CCA-adding enzyme subfamily.</text>
</comment>
<feature type="chain" id="PRO_1000214146" description="CCA-adding enzyme">
    <location>
        <begin position="1"/>
        <end position="454"/>
    </location>
</feature>
<feature type="binding site" evidence="1">
    <location>
        <position position="53"/>
    </location>
    <ligand>
        <name>ATP</name>
        <dbReference type="ChEBI" id="CHEBI:30616"/>
    </ligand>
</feature>
<feature type="binding site" evidence="1">
    <location>
        <position position="53"/>
    </location>
    <ligand>
        <name>CTP</name>
        <dbReference type="ChEBI" id="CHEBI:37563"/>
    </ligand>
</feature>
<feature type="binding site" evidence="1">
    <location>
        <position position="56"/>
    </location>
    <ligand>
        <name>ATP</name>
        <dbReference type="ChEBI" id="CHEBI:30616"/>
    </ligand>
</feature>
<feature type="binding site" evidence="1">
    <location>
        <position position="56"/>
    </location>
    <ligand>
        <name>CTP</name>
        <dbReference type="ChEBI" id="CHEBI:37563"/>
    </ligand>
</feature>
<feature type="binding site" evidence="1">
    <location>
        <position position="65"/>
    </location>
    <ligand>
        <name>Mg(2+)</name>
        <dbReference type="ChEBI" id="CHEBI:18420"/>
    </ligand>
</feature>
<feature type="binding site" evidence="1">
    <location>
        <position position="67"/>
    </location>
    <ligand>
        <name>Mg(2+)</name>
        <dbReference type="ChEBI" id="CHEBI:18420"/>
    </ligand>
</feature>
<feature type="binding site" evidence="1">
    <location>
        <position position="119"/>
    </location>
    <ligand>
        <name>Mg(2+)</name>
        <dbReference type="ChEBI" id="CHEBI:18420"/>
    </ligand>
</feature>
<feature type="binding site" evidence="1">
    <location>
        <position position="142"/>
    </location>
    <ligand>
        <name>ATP</name>
        <dbReference type="ChEBI" id="CHEBI:30616"/>
    </ligand>
</feature>
<feature type="binding site" evidence="1">
    <location>
        <position position="142"/>
    </location>
    <ligand>
        <name>CTP</name>
        <dbReference type="ChEBI" id="CHEBI:37563"/>
    </ligand>
</feature>
<feature type="binding site" evidence="1">
    <location>
        <position position="161"/>
    </location>
    <ligand>
        <name>ATP</name>
        <dbReference type="ChEBI" id="CHEBI:30616"/>
    </ligand>
</feature>
<feature type="binding site" evidence="1">
    <location>
        <position position="161"/>
    </location>
    <ligand>
        <name>CTP</name>
        <dbReference type="ChEBI" id="CHEBI:37563"/>
    </ligand>
</feature>
<feature type="binding site" evidence="1">
    <location>
        <position position="170"/>
    </location>
    <ligand>
        <name>ATP</name>
        <dbReference type="ChEBI" id="CHEBI:30616"/>
    </ligand>
</feature>
<feature type="binding site" evidence="1">
    <location>
        <position position="170"/>
    </location>
    <ligand>
        <name>CTP</name>
        <dbReference type="ChEBI" id="CHEBI:37563"/>
    </ligand>
</feature>
<sequence length="454" mass="53071">MEMEEVLSEVIQRIRPSDEERAFVKGLMEELRTIAEERIEELGLDARPYFVGSLAKDTYLAGDHDIDLFLAFPLETPLEELRKKGLELGKAIAEKLDSHEIAYAEHPYVRARYRGVRVDLVPCYDVGNWRDVRTAVDRSILHTRWVNENLRGRNDEVRLLKRFLKGINAYGSEIYVRGFSGYLAEILVIKYGSFLDVVEKADFLLRQKIIDPENWLRKEPEVALKTVKRETEEDRPLIVIDPVDPRRNVSANLSWEKYGRFYFKSIEFLENPSVGFFFPPEKPKGSYLDELRKRGTALVTLLINVPDMVDDVLLPQLERSARGFERTLEREGFGVLGWDVGRKGRAFIMLELDRERRERVKIKPGPEFFTERGRDFYRKNEKVWLIGKRLYSEKLVRESVVDVIIELLEKNQVSLGKGIRDAIRRADILLNYVPKELEEEAYLFLSREKWNIKG</sequence>
<organism>
    <name type="scientific">Thermococcus gammatolerans (strain DSM 15229 / JCM 11827 / EJ3)</name>
    <dbReference type="NCBI Taxonomy" id="593117"/>
    <lineage>
        <taxon>Archaea</taxon>
        <taxon>Methanobacteriati</taxon>
        <taxon>Methanobacteriota</taxon>
        <taxon>Thermococci</taxon>
        <taxon>Thermococcales</taxon>
        <taxon>Thermococcaceae</taxon>
        <taxon>Thermococcus</taxon>
    </lineage>
</organism>
<reference key="1">
    <citation type="journal article" date="2007" name="Genome Biol.">
        <title>Genome analysis and genome-wide proteomics of Thermococcus gammatolerans, the most radioresistant organism known amongst the Archaea.</title>
        <authorList>
            <person name="Zivanovic Y."/>
            <person name="Armengaud J."/>
            <person name="Lagorce A."/>
            <person name="Leplat C."/>
            <person name="Guerin P."/>
            <person name="Dutertre M."/>
            <person name="Anthouard V."/>
            <person name="Forterre P."/>
            <person name="Wincker P."/>
            <person name="Confalonieri F."/>
        </authorList>
    </citation>
    <scope>NUCLEOTIDE SEQUENCE [LARGE SCALE GENOMIC DNA]</scope>
    <source>
        <strain>DSM 15229 / JCM 11827 / EJ3</strain>
    </source>
</reference>
<dbReference type="EC" id="2.7.7.72" evidence="1"/>
<dbReference type="EMBL" id="CP001398">
    <property type="protein sequence ID" value="ACS32921.1"/>
    <property type="molecule type" value="Genomic_DNA"/>
</dbReference>
<dbReference type="RefSeq" id="WP_015858039.1">
    <property type="nucleotide sequence ID" value="NC_012804.1"/>
</dbReference>
<dbReference type="SMR" id="C5A3V9"/>
<dbReference type="STRING" id="593117.TGAM_0419"/>
<dbReference type="PaxDb" id="593117-TGAM_0419"/>
<dbReference type="GeneID" id="7987966"/>
<dbReference type="KEGG" id="tga:TGAM_0419"/>
<dbReference type="PATRIC" id="fig|593117.10.peg.415"/>
<dbReference type="eggNOG" id="arCOG04249">
    <property type="taxonomic scope" value="Archaea"/>
</dbReference>
<dbReference type="HOGENOM" id="CLU_044679_1_0_2"/>
<dbReference type="OrthoDB" id="7378at2157"/>
<dbReference type="Proteomes" id="UP000001488">
    <property type="component" value="Chromosome"/>
</dbReference>
<dbReference type="GO" id="GO:0005524">
    <property type="term" value="F:ATP binding"/>
    <property type="evidence" value="ECO:0007669"/>
    <property type="project" value="UniProtKB-UniRule"/>
</dbReference>
<dbReference type="GO" id="GO:0004810">
    <property type="term" value="F:CCA tRNA nucleotidyltransferase activity"/>
    <property type="evidence" value="ECO:0007669"/>
    <property type="project" value="UniProtKB-UniRule"/>
</dbReference>
<dbReference type="GO" id="GO:0000287">
    <property type="term" value="F:magnesium ion binding"/>
    <property type="evidence" value="ECO:0007669"/>
    <property type="project" value="UniProtKB-UniRule"/>
</dbReference>
<dbReference type="GO" id="GO:0000049">
    <property type="term" value="F:tRNA binding"/>
    <property type="evidence" value="ECO:0007669"/>
    <property type="project" value="UniProtKB-UniRule"/>
</dbReference>
<dbReference type="GO" id="GO:0042245">
    <property type="term" value="P:RNA repair"/>
    <property type="evidence" value="ECO:0007669"/>
    <property type="project" value="UniProtKB-KW"/>
</dbReference>
<dbReference type="GO" id="GO:0001680">
    <property type="term" value="P:tRNA 3'-terminal CCA addition"/>
    <property type="evidence" value="ECO:0007669"/>
    <property type="project" value="UniProtKB-UniRule"/>
</dbReference>
<dbReference type="CDD" id="cd05400">
    <property type="entry name" value="NT_2-5OAS_ClassI-CCAase"/>
    <property type="match status" value="1"/>
</dbReference>
<dbReference type="Gene3D" id="3.30.70.1550">
    <property type="entry name" value="Archaeal tRNA CCA-adding enzyme catalytic domain"/>
    <property type="match status" value="1"/>
</dbReference>
<dbReference type="Gene3D" id="3.30.460.10">
    <property type="entry name" value="Beta Polymerase, domain 2"/>
    <property type="match status" value="1"/>
</dbReference>
<dbReference type="Gene3D" id="1.10.1410.30">
    <property type="entry name" value="CCA tRNA nucleotidyltransferase, domain 2"/>
    <property type="match status" value="1"/>
</dbReference>
<dbReference type="Gene3D" id="3.30.70.590">
    <property type="entry name" value="Poly(A) polymerase predicted RNA binding domain"/>
    <property type="match status" value="1"/>
</dbReference>
<dbReference type="HAMAP" id="MF_01264">
    <property type="entry name" value="CCA_arch"/>
    <property type="match status" value="1"/>
</dbReference>
<dbReference type="InterPro" id="IPR048833">
    <property type="entry name" value="CAA_C"/>
</dbReference>
<dbReference type="InterPro" id="IPR008229">
    <property type="entry name" value="CCA-adding_arc"/>
</dbReference>
<dbReference type="InterPro" id="IPR042090">
    <property type="entry name" value="CCA_tRNA_nucleotrans_2"/>
</dbReference>
<dbReference type="InterPro" id="IPR006116">
    <property type="entry name" value="NT_2-5OAS_ClassI-CCAase"/>
</dbReference>
<dbReference type="InterPro" id="IPR043519">
    <property type="entry name" value="NT_sf"/>
</dbReference>
<dbReference type="InterPro" id="IPR011068">
    <property type="entry name" value="NuclTrfase_I-like_C"/>
</dbReference>
<dbReference type="InterPro" id="IPR002934">
    <property type="entry name" value="Polymerase_NTP_transf_dom"/>
</dbReference>
<dbReference type="InterPro" id="IPR015329">
    <property type="entry name" value="tRNA_NucTransf2"/>
</dbReference>
<dbReference type="NCBIfam" id="TIGR03671">
    <property type="entry name" value="cca_archaeal"/>
    <property type="match status" value="1"/>
</dbReference>
<dbReference type="PANTHER" id="PTHR39643">
    <property type="entry name" value="CCA-ADDING ENZYME"/>
    <property type="match status" value="1"/>
</dbReference>
<dbReference type="PANTHER" id="PTHR39643:SF1">
    <property type="entry name" value="CCA-ADDING ENZYME"/>
    <property type="match status" value="1"/>
</dbReference>
<dbReference type="Pfam" id="PF21133">
    <property type="entry name" value="CAA_C"/>
    <property type="match status" value="1"/>
</dbReference>
<dbReference type="Pfam" id="PF01909">
    <property type="entry name" value="NTP_transf_2"/>
    <property type="match status" value="1"/>
</dbReference>
<dbReference type="Pfam" id="PF09249">
    <property type="entry name" value="tRNA_NucTransf2"/>
    <property type="match status" value="1"/>
</dbReference>
<dbReference type="PIRSF" id="PIRSF005335">
    <property type="entry name" value="CCA_arch"/>
    <property type="match status" value="1"/>
</dbReference>
<dbReference type="SUPFAM" id="SSF81301">
    <property type="entry name" value="Nucleotidyltransferase"/>
    <property type="match status" value="1"/>
</dbReference>
<dbReference type="SUPFAM" id="SSF55003">
    <property type="entry name" value="PAP/Archaeal CCA-adding enzyme, C-terminal domain"/>
    <property type="match status" value="1"/>
</dbReference>
<dbReference type="SUPFAM" id="SSF81631">
    <property type="entry name" value="PAP/OAS1 substrate-binding domain"/>
    <property type="match status" value="1"/>
</dbReference>
<accession>C5A3V9</accession>
<name>CCA_THEGJ</name>
<gene>
    <name evidence="1" type="primary">cca</name>
    <name type="ordered locus">TGAM_0419</name>
</gene>
<protein>
    <recommendedName>
        <fullName evidence="1">CCA-adding enzyme</fullName>
        <ecNumber evidence="1">2.7.7.72</ecNumber>
    </recommendedName>
    <alternativeName>
        <fullName evidence="1">CCA tRNA nucleotidyltransferase</fullName>
    </alternativeName>
    <alternativeName>
        <fullName evidence="1">tRNA CCA-pyrophosphorylase</fullName>
    </alternativeName>
    <alternativeName>
        <fullName evidence="1">tRNA adenylyl-/cytidylyl- transferase</fullName>
    </alternativeName>
    <alternativeName>
        <fullName evidence="1">tRNA nucleotidyltransferase</fullName>
    </alternativeName>
    <alternativeName>
        <fullName evidence="1">tRNA-NT</fullName>
    </alternativeName>
</protein>
<evidence type="ECO:0000255" key="1">
    <source>
        <dbReference type="HAMAP-Rule" id="MF_01264"/>
    </source>
</evidence>
<proteinExistence type="inferred from homology"/>